<sequence>MAAGGPGAGSAAPVSSTSSLPLAALNMRVRRRLSLFLNVRTQVAADWTALAEEMDFEYLEIRQLETHADPTGRLLDAWQGRPGASVGRLLELLTKLGRDDVLLELGPSIEEDCQKYILKQQQEEAEKPLQVAAVDSSVPRTAELAGITTLDDPLGHMPERFDAFICYCPSDIQFVQEMIRQLEQTNYRLKLCVSDRDVLPGTCVWSIASELIEKRCRRMVVVVSDDYLQSKECDFQTKFALSLSPGAHQKRLIPIKYKAMKKEFPSILRFITVCDYTNPCTKSWFWTRLAKALSLP</sequence>
<dbReference type="EMBL" id="AB446474">
    <property type="protein sequence ID" value="BAG55251.1"/>
    <property type="molecule type" value="mRNA"/>
</dbReference>
<dbReference type="BMRB" id="B3Y681"/>
<dbReference type="SMR" id="B3Y681"/>
<dbReference type="GO" id="GO:0005737">
    <property type="term" value="C:cytoplasm"/>
    <property type="evidence" value="ECO:0007669"/>
    <property type="project" value="UniProtKB-SubCell"/>
</dbReference>
<dbReference type="GO" id="GO:0005634">
    <property type="term" value="C:nucleus"/>
    <property type="evidence" value="ECO:0007669"/>
    <property type="project" value="UniProtKB-SubCell"/>
</dbReference>
<dbReference type="GO" id="GO:0005886">
    <property type="term" value="C:plasma membrane"/>
    <property type="evidence" value="ECO:0007669"/>
    <property type="project" value="TreeGrafter"/>
</dbReference>
<dbReference type="GO" id="GO:0070976">
    <property type="term" value="F:TIR domain binding"/>
    <property type="evidence" value="ECO:0007669"/>
    <property type="project" value="InterPro"/>
</dbReference>
<dbReference type="GO" id="GO:0035325">
    <property type="term" value="F:Toll-like receptor binding"/>
    <property type="evidence" value="ECO:0007669"/>
    <property type="project" value="TreeGrafter"/>
</dbReference>
<dbReference type="GO" id="GO:0050830">
    <property type="term" value="P:defense response to Gram-positive bacterium"/>
    <property type="evidence" value="ECO:0000250"/>
    <property type="project" value="UniProtKB"/>
</dbReference>
<dbReference type="GO" id="GO:0051607">
    <property type="term" value="P:defense response to virus"/>
    <property type="evidence" value="ECO:0000250"/>
    <property type="project" value="UniProtKB"/>
</dbReference>
<dbReference type="GO" id="GO:0006954">
    <property type="term" value="P:inflammatory response"/>
    <property type="evidence" value="ECO:0007669"/>
    <property type="project" value="UniProtKB-KW"/>
</dbReference>
<dbReference type="GO" id="GO:0045087">
    <property type="term" value="P:innate immune response"/>
    <property type="evidence" value="ECO:0007669"/>
    <property type="project" value="UniProtKB-KW"/>
</dbReference>
<dbReference type="GO" id="GO:0002755">
    <property type="term" value="P:MyD88-dependent toll-like receptor signaling pathway"/>
    <property type="evidence" value="ECO:0007669"/>
    <property type="project" value="InterPro"/>
</dbReference>
<dbReference type="GO" id="GO:0043123">
    <property type="term" value="P:positive regulation of canonical NF-kappaB signal transduction"/>
    <property type="evidence" value="ECO:0007669"/>
    <property type="project" value="InterPro"/>
</dbReference>
<dbReference type="GO" id="GO:0032731">
    <property type="term" value="P:positive regulation of interleukin-1 beta production"/>
    <property type="evidence" value="ECO:0000250"/>
    <property type="project" value="UniProtKB"/>
</dbReference>
<dbReference type="GO" id="GO:1900227">
    <property type="term" value="P:positive regulation of NLRP3 inflammasome complex assembly"/>
    <property type="evidence" value="ECO:0000250"/>
    <property type="project" value="UniProtKB"/>
</dbReference>
<dbReference type="GO" id="GO:0008063">
    <property type="term" value="P:Toll signaling pathway"/>
    <property type="evidence" value="ECO:0007669"/>
    <property type="project" value="TreeGrafter"/>
</dbReference>
<dbReference type="GO" id="GO:0034142">
    <property type="term" value="P:toll-like receptor 4 signaling pathway"/>
    <property type="evidence" value="ECO:0007669"/>
    <property type="project" value="TreeGrafter"/>
</dbReference>
<dbReference type="GO" id="GO:0034158">
    <property type="term" value="P:toll-like receptor 8 signaling pathway"/>
    <property type="evidence" value="ECO:0000250"/>
    <property type="project" value="UniProtKB"/>
</dbReference>
<dbReference type="CDD" id="cd08312">
    <property type="entry name" value="Death_MyD88"/>
    <property type="match status" value="1"/>
</dbReference>
<dbReference type="FunFam" id="1.10.533.10:FF:000029">
    <property type="entry name" value="Myeloid differentiation primary response protein MyD88"/>
    <property type="match status" value="1"/>
</dbReference>
<dbReference type="FunFam" id="3.40.50.10140:FF:000005">
    <property type="entry name" value="Myeloid differentiation primary response protein MyD88"/>
    <property type="match status" value="1"/>
</dbReference>
<dbReference type="Gene3D" id="1.10.533.10">
    <property type="entry name" value="Death Domain, Fas"/>
    <property type="match status" value="1"/>
</dbReference>
<dbReference type="Gene3D" id="3.40.50.10140">
    <property type="entry name" value="Toll/interleukin-1 receptor homology (TIR) domain"/>
    <property type="match status" value="1"/>
</dbReference>
<dbReference type="InterPro" id="IPR011029">
    <property type="entry name" value="DEATH-like_dom_sf"/>
</dbReference>
<dbReference type="InterPro" id="IPR000488">
    <property type="entry name" value="Death_dom"/>
</dbReference>
<dbReference type="InterPro" id="IPR034249">
    <property type="entry name" value="MyD88_Death"/>
</dbReference>
<dbReference type="InterPro" id="IPR017281">
    <property type="entry name" value="Myelin_different_resp_MyD88"/>
</dbReference>
<dbReference type="InterPro" id="IPR000157">
    <property type="entry name" value="TIR_dom"/>
</dbReference>
<dbReference type="InterPro" id="IPR035897">
    <property type="entry name" value="Toll_tir_struct_dom_sf"/>
</dbReference>
<dbReference type="PANTHER" id="PTHR15079">
    <property type="entry name" value="MYD88"/>
    <property type="match status" value="1"/>
</dbReference>
<dbReference type="PANTHER" id="PTHR15079:SF3">
    <property type="entry name" value="MYELOID DIFFERENTIATION PRIMARY RESPONSE PROTEIN MYD88"/>
    <property type="match status" value="1"/>
</dbReference>
<dbReference type="Pfam" id="PF00531">
    <property type="entry name" value="Death"/>
    <property type="match status" value="1"/>
</dbReference>
<dbReference type="Pfam" id="PF13676">
    <property type="entry name" value="TIR_2"/>
    <property type="match status" value="1"/>
</dbReference>
<dbReference type="PIRSF" id="PIRSF037756">
    <property type="entry name" value="MyD88"/>
    <property type="match status" value="1"/>
</dbReference>
<dbReference type="SMART" id="SM00005">
    <property type="entry name" value="DEATH"/>
    <property type="match status" value="1"/>
</dbReference>
<dbReference type="SMART" id="SM00255">
    <property type="entry name" value="TIR"/>
    <property type="match status" value="1"/>
</dbReference>
<dbReference type="SUPFAM" id="SSF47986">
    <property type="entry name" value="DEATH domain"/>
    <property type="match status" value="1"/>
</dbReference>
<dbReference type="SUPFAM" id="SSF52200">
    <property type="entry name" value="Toll/Interleukin receptor TIR domain"/>
    <property type="match status" value="1"/>
</dbReference>
<dbReference type="PROSITE" id="PS50017">
    <property type="entry name" value="DEATH_DOMAIN"/>
    <property type="match status" value="1"/>
</dbReference>
<dbReference type="PROSITE" id="PS50104">
    <property type="entry name" value="TIR"/>
    <property type="match status" value="1"/>
</dbReference>
<proteinExistence type="evidence at transcript level"/>
<name>MYD88_PONPY</name>
<feature type="chain" id="PRO_0000393137" description="Myeloid differentiation primary response protein MyD88">
    <location>
        <begin position="1"/>
        <end position="296"/>
    </location>
</feature>
<feature type="domain" description="Death" evidence="4">
    <location>
        <begin position="32"/>
        <end position="109"/>
    </location>
</feature>
<feature type="domain" description="TIR" evidence="5">
    <location>
        <begin position="159"/>
        <end position="293"/>
    </location>
</feature>
<feature type="region of interest" description="Intermediate domain" evidence="1">
    <location>
        <begin position="110"/>
        <end position="155"/>
    </location>
</feature>
<feature type="modified residue" description="Phosphoserine" evidence="3">
    <location>
        <position position="244"/>
    </location>
</feature>
<accession>B3Y681</accession>
<gene>
    <name type="primary">MYD88</name>
</gene>
<reference key="1">
    <citation type="journal article" date="2008" name="Immunogenetics">
        <title>Natural selection in the TLR-related genes in the course of primate evolution.</title>
        <authorList>
            <person name="Nakajima T."/>
            <person name="Ohtani H."/>
            <person name="Satta Y."/>
            <person name="Uno Y."/>
            <person name="Akari H."/>
            <person name="Ishida T."/>
            <person name="Kimura A."/>
        </authorList>
    </citation>
    <scope>NUCLEOTIDE SEQUENCE [MRNA]</scope>
</reference>
<protein>
    <recommendedName>
        <fullName>Myeloid differentiation primary response protein MyD88</fullName>
    </recommendedName>
</protein>
<organism>
    <name type="scientific">Pongo pygmaeus</name>
    <name type="common">Bornean orangutan</name>
    <dbReference type="NCBI Taxonomy" id="9600"/>
    <lineage>
        <taxon>Eukaryota</taxon>
        <taxon>Metazoa</taxon>
        <taxon>Chordata</taxon>
        <taxon>Craniata</taxon>
        <taxon>Vertebrata</taxon>
        <taxon>Euteleostomi</taxon>
        <taxon>Mammalia</taxon>
        <taxon>Eutheria</taxon>
        <taxon>Euarchontoglires</taxon>
        <taxon>Primates</taxon>
        <taxon>Haplorrhini</taxon>
        <taxon>Catarrhini</taxon>
        <taxon>Hominidae</taxon>
        <taxon>Pongo</taxon>
    </lineage>
</organism>
<keyword id="KW-0963">Cytoplasm</keyword>
<keyword id="KW-0391">Immunity</keyword>
<keyword id="KW-0395">Inflammatory response</keyword>
<keyword id="KW-0399">Innate immunity</keyword>
<keyword id="KW-0539">Nucleus</keyword>
<keyword id="KW-0597">Phosphoprotein</keyword>
<keyword id="KW-0832">Ubl conjugation</keyword>
<comment type="function">
    <text evidence="2 3">Adapter protein involved in the Toll-like receptor and IL-1 receptor signaling pathway in the innate immune response. Acts via IRAK1, IRAK2, IRF7 and TRAF6, leading to NF-kappa-B activation, cytokine secretion and the inflammatory response. Increases IL-8 transcription. Involved in IL-18-mediated signaling pathway. Activates IRF1 resulting in its rapid migration into the nucleus to mediate an efficient induction of IFN-beta, NOS2/INOS, and IL12A genes. Upon TLR8 activation by GU-rich single-stranded RNA (GU-rich RNA) derived from viruses, induces IL1B release through NLRP3 inflammasome activation (By similarity). MyD88-mediated signaling in intestinal epithelial cells is crucial for maintenance of gut homeostasis and controls the expression of the antimicrobial lectin REG3G in the small intestine (By similarity).</text>
</comment>
<comment type="subunit">
    <text evidence="3">Homodimer. Also forms heterodimers with TIRAP. Binds to TLR2, TLR4, IRAK1, IRAK2 and IRAK4 via their respective TIR domains. Interacts with IL18R1. Interacts with BMX, IL1RL1, IKBKE and IRF7. Interacts with LRRFIP1 and LRRFIP2; this interaction positively regulates Toll-like receptor (TLR) signaling in response to agonist. Interacts with FLII. LRRFIP1 and LRRFIP2 compete with FLII for MYD88-binding. Interacts with IRF1. Upon IL1B treatment, forms a complex with PELI1, IRAK1, IRAK4 and TRAF6; this complex recruits MAP3K7/TAK1, TAB1 and TAB2 to mediate NF-kappa-B activation. Direct binding of SMAD6 to PELI1 prevents the complex formation and hence negatively regulates IL1R-TLR signaling and eventually NF-kappa-B-mediated gene expression. May interact with PIK3AP1. Interacts (via TIR domain) with DHX9 (via H2A and OB-fold regions); this interaction is direct. Interacts with OTUD4 deubiquitinase; the interaction is direct.</text>
</comment>
<comment type="subcellular location">
    <subcellularLocation>
        <location evidence="3">Cytoplasm</location>
    </subcellularLocation>
    <subcellularLocation>
        <location evidence="3">Nucleus</location>
    </subcellularLocation>
</comment>
<comment type="domain">
    <text evidence="2">The intermediate domain (ID) is required for the phosphorylation and activation of IRAK.</text>
</comment>
<comment type="PTM">
    <text evidence="3">Ubiquitinated; undergoes 'Lys-63'-linked polyubiquitination. OTUD4 specifically hydrolyzes 'Lys-63'-linked polyubiquitinated MYD88. Deubiquitinated by USP3 that cleaves 'Lys-63'-linked ubiquitin chains leading to inhibition of MYD88-induced NF-kappa-B signaling.</text>
</comment>
<evidence type="ECO:0000250" key="1"/>
<evidence type="ECO:0000250" key="2">
    <source>
        <dbReference type="UniProtKB" id="P22366"/>
    </source>
</evidence>
<evidence type="ECO:0000250" key="3">
    <source>
        <dbReference type="UniProtKB" id="Q99836"/>
    </source>
</evidence>
<evidence type="ECO:0000255" key="4">
    <source>
        <dbReference type="PROSITE-ProRule" id="PRU00064"/>
    </source>
</evidence>
<evidence type="ECO:0000255" key="5">
    <source>
        <dbReference type="PROSITE-ProRule" id="PRU00204"/>
    </source>
</evidence>